<feature type="chain" id="PRO_0000421756" description="L-glutamyl-[BtrI acyl-carrier protein] decarboxylase">
    <location>
        <begin position="1"/>
        <end position="428"/>
    </location>
</feature>
<feature type="binding site" evidence="1">
    <location>
        <position position="228"/>
    </location>
    <ligand>
        <name>pyridoxal 5'-phosphate</name>
        <dbReference type="ChEBI" id="CHEBI:597326"/>
    </ligand>
</feature>
<feature type="binding site" evidence="1">
    <location>
        <begin position="269"/>
        <end position="272"/>
    </location>
    <ligand>
        <name>pyridoxal 5'-phosphate</name>
        <dbReference type="ChEBI" id="CHEBI:597326"/>
    </ligand>
</feature>
<feature type="binding site" evidence="1">
    <location>
        <position position="272"/>
    </location>
    <ligand>
        <name>substrate</name>
    </ligand>
</feature>
<feature type="binding site" evidence="1">
    <location>
        <position position="375"/>
    </location>
    <ligand>
        <name>pyridoxal 5'-phosphate</name>
        <dbReference type="ChEBI" id="CHEBI:597326"/>
    </ligand>
</feature>
<feature type="binding site" evidence="1">
    <location>
        <position position="375"/>
    </location>
    <ligand>
        <name>substrate</name>
    </ligand>
</feature>
<feature type="modified residue" description="N6-(pyridoxal phosphate)lysine">
    <location>
        <position position="49"/>
    </location>
</feature>
<feature type="helix" evidence="5">
    <location>
        <begin position="5"/>
        <end position="14"/>
    </location>
</feature>
<feature type="strand" evidence="5">
    <location>
        <begin position="17"/>
        <end position="23"/>
    </location>
</feature>
<feature type="helix" evidence="5">
    <location>
        <begin position="24"/>
        <end position="36"/>
    </location>
</feature>
<feature type="strand" evidence="5">
    <location>
        <begin position="42"/>
        <end position="47"/>
    </location>
</feature>
<feature type="helix" evidence="5">
    <location>
        <begin position="48"/>
        <end position="50"/>
    </location>
</feature>
<feature type="helix" evidence="5">
    <location>
        <begin position="54"/>
        <end position="63"/>
    </location>
</feature>
<feature type="strand" evidence="5">
    <location>
        <begin position="66"/>
        <end position="69"/>
    </location>
</feature>
<feature type="helix" evidence="5">
    <location>
        <begin position="72"/>
        <end position="80"/>
    </location>
</feature>
<feature type="helix" evidence="5">
    <location>
        <begin position="85"/>
        <end position="87"/>
    </location>
</feature>
<feature type="strand" evidence="5">
    <location>
        <begin position="88"/>
        <end position="90"/>
    </location>
</feature>
<feature type="helix" evidence="5">
    <location>
        <begin position="97"/>
        <end position="106"/>
    </location>
</feature>
<feature type="strand" evidence="5">
    <location>
        <begin position="109"/>
        <end position="113"/>
    </location>
</feature>
<feature type="helix" evidence="5">
    <location>
        <begin position="116"/>
        <end position="129"/>
    </location>
</feature>
<feature type="strand" evidence="5">
    <location>
        <begin position="133"/>
        <end position="140"/>
    </location>
</feature>
<feature type="strand" evidence="5">
    <location>
        <begin position="150"/>
        <end position="153"/>
    </location>
</feature>
<feature type="strand" evidence="5">
    <location>
        <begin position="158"/>
        <end position="162"/>
    </location>
</feature>
<feature type="helix" evidence="5">
    <location>
        <begin position="163"/>
        <end position="165"/>
    </location>
</feature>
<feature type="helix" evidence="5">
    <location>
        <begin position="166"/>
        <end position="174"/>
    </location>
</feature>
<feature type="strand" evidence="5">
    <location>
        <begin position="179"/>
        <end position="185"/>
    </location>
</feature>
<feature type="strand" evidence="5">
    <location>
        <begin position="190"/>
        <end position="192"/>
    </location>
</feature>
<feature type="helix" evidence="5">
    <location>
        <begin position="195"/>
        <end position="216"/>
    </location>
</feature>
<feature type="strand" evidence="5">
    <location>
        <begin position="221"/>
        <end position="224"/>
    </location>
</feature>
<feature type="helix" evidence="5">
    <location>
        <begin position="242"/>
        <end position="258"/>
    </location>
</feature>
<feature type="strand" evidence="5">
    <location>
        <begin position="265"/>
        <end position="271"/>
    </location>
</feature>
<feature type="helix" evidence="5">
    <location>
        <begin position="272"/>
        <end position="275"/>
    </location>
</feature>
<feature type="helix" evidence="5">
    <location>
        <begin position="276"/>
        <end position="278"/>
    </location>
</feature>
<feature type="strand" evidence="5">
    <location>
        <begin position="279"/>
        <end position="291"/>
    </location>
</feature>
<feature type="strand" evidence="5">
    <location>
        <begin position="294"/>
        <end position="300"/>
    </location>
</feature>
<feature type="turn" evidence="5">
    <location>
        <begin position="303"/>
        <end position="305"/>
    </location>
</feature>
<feature type="helix" evidence="5">
    <location>
        <begin position="307"/>
        <end position="310"/>
    </location>
</feature>
<feature type="strand" evidence="5">
    <location>
        <begin position="322"/>
        <end position="325"/>
    </location>
</feature>
<feature type="strand" evidence="5">
    <location>
        <begin position="336"/>
        <end position="342"/>
    </location>
</feature>
<feature type="strand" evidence="5">
    <location>
        <begin position="344"/>
        <end position="347"/>
    </location>
</feature>
<feature type="strand" evidence="5">
    <location>
        <begin position="351"/>
        <end position="359"/>
    </location>
</feature>
<feature type="strand" evidence="5">
    <location>
        <begin position="366"/>
        <end position="371"/>
    </location>
</feature>
<feature type="strand" evidence="5">
    <location>
        <begin position="373"/>
        <end position="376"/>
    </location>
</feature>
<feature type="helix" evidence="5">
    <location>
        <begin position="377"/>
        <end position="379"/>
    </location>
</feature>
<feature type="helix" evidence="5">
    <location>
        <begin position="384"/>
        <end position="386"/>
    </location>
</feature>
<feature type="strand" evidence="5">
    <location>
        <begin position="391"/>
        <end position="396"/>
    </location>
</feature>
<feature type="strand" evidence="5">
    <location>
        <begin position="399"/>
        <end position="404"/>
    </location>
</feature>
<feature type="helix" evidence="5">
    <location>
        <begin position="409"/>
        <end position="417"/>
    </location>
</feature>
<proteinExistence type="evidence at protein level"/>
<evidence type="ECO:0000250" key="1"/>
<evidence type="ECO:0000269" key="2">
    <source>
    </source>
</evidence>
<evidence type="ECO:0000269" key="3">
    <source ref="4"/>
</evidence>
<evidence type="ECO:0000305" key="4"/>
<evidence type="ECO:0007829" key="5">
    <source>
        <dbReference type="PDB" id="7RU7"/>
    </source>
</evidence>
<protein>
    <recommendedName>
        <fullName>L-glutamyl-[BtrI acyl-carrier protein] decarboxylase</fullName>
        <ecNumber>4.1.1.95</ecNumber>
    </recommendedName>
    <alternativeName>
        <fullName>Butirosin biosynthesis protein K</fullName>
    </alternativeName>
</protein>
<keyword id="KW-0002">3D-structure</keyword>
<keyword id="KW-0045">Antibiotic biosynthesis</keyword>
<keyword id="KW-0210">Decarboxylase</keyword>
<keyword id="KW-0456">Lyase</keyword>
<keyword id="KW-0663">Pyridoxal phosphate</keyword>
<reference key="1">
    <citation type="journal article" date="2005" name="J. Antibiot.">
        <title>Extended sequence and functional analysis of the butirosin biosynthetic gene cluster in Bacillus circulans SANK 72073.</title>
        <authorList>
            <person name="Kudo F."/>
            <person name="Numakura M."/>
            <person name="Tamegai H."/>
            <person name="Yamamoto H."/>
            <person name="Eguchi T."/>
            <person name="Kakinuma K."/>
        </authorList>
    </citation>
    <scope>NUCLEOTIDE SEQUENCE [GENOMIC DNA]</scope>
    <source>
        <strain>ATCC 21557 / NCIMB 12336 / BU-1709-YQW-B6</strain>
    </source>
</reference>
<reference key="2">
    <citation type="submission" date="2004-06" db="EMBL/GenBank/DDBJ databases">
        <title>Analysis and comparison of the biosynthetic gene clusters for the 2-deoxystreptamine-containing aminoglycoside antibiotics ribostamycin, neomycin, lividomycin, paromomycin and butirosin.</title>
        <authorList>
            <person name="Aboshanab K.M."/>
            <person name="Schmidt-Beissner H."/>
            <person name="Wehmeier U.F."/>
            <person name="Welzel K."/>
            <person name="Vente A."/>
            <person name="Piepersberg W."/>
        </authorList>
    </citation>
    <scope>NUCLEOTIDE SEQUENCE [GENOMIC DNA]</scope>
    <source>
        <strain>ATCC 21557 / NCIMB 12336 / BU-1709-YQW-B6</strain>
    </source>
</reference>
<reference key="3">
    <citation type="journal article" date="2005" name="Chem. Biol.">
        <title>Biosynthesis of the unique amino acid side chain of butirosin: possible protective-group chemistry in an acyl carrier protein-mediated pathway.</title>
        <authorList>
            <person name="Li Y."/>
            <person name="Llewellyn N.M."/>
            <person name="Giri R."/>
            <person name="Huang F."/>
            <person name="Spencer J.B."/>
        </authorList>
    </citation>
    <scope>FUNCTION</scope>
    <scope>CATALYTIC ACTIVITY</scope>
    <scope>PATHWAY</scope>
    <scope>COFACTOR</scope>
    <scope>SUBUNIT</scope>
    <source>
        <strain>ATCC 21557 / NCIMB 12336 / BU-1709-YQW-B6</strain>
    </source>
</reference>
<reference key="4">
    <citation type="submission" date="2006-09" db="PDB data bank">
        <title>Structural characterisation of Btrk decarboxylase from Bacillus circulans butirosin biosynthesis.</title>
        <authorList>
            <person name="Popovic B."/>
            <person name="Li Y."/>
            <person name="Chirgadze D.Y."/>
            <person name="Blundell T.L."/>
            <person name="Spencer J.B."/>
        </authorList>
    </citation>
    <scope>X-RAY CRYSTALLOGRAPHY (1.65 ANGSTROMS) IN COMPLEX WITH PYRIDOXAL PHOSPHATE</scope>
    <scope>COFACTOR</scope>
</reference>
<comment type="function">
    <text evidence="2">Pyridoxal phosphate-dependent decarboxylase that catalyzes 1 step in the biosynthesis of the side chain of the aminoglycoside antibiotics in the biosynthetic pathway of butirosin. Able to decarboxylate L-ornithine, L-arginine, L-lysine, but not L-glutamate or any D-amino acids. Has low activity with substrates not bound to an acyl-carrier protein.</text>
</comment>
<comment type="catalytic activity">
    <reaction evidence="2">
        <text>gamma-L-glutamyl-[BtrI ACP] + H(+) = 4-aminobutanoyl-[BtrI ACP] + CO2</text>
        <dbReference type="Rhea" id="RHEA:53956"/>
        <dbReference type="Rhea" id="RHEA-COMP:13742"/>
        <dbReference type="Rhea" id="RHEA-COMP:13744"/>
        <dbReference type="ChEBI" id="CHEBI:15378"/>
        <dbReference type="ChEBI" id="CHEBI:16526"/>
        <dbReference type="ChEBI" id="CHEBI:137996"/>
        <dbReference type="ChEBI" id="CHEBI:137997"/>
        <dbReference type="EC" id="4.1.1.95"/>
    </reaction>
</comment>
<comment type="cofactor">
    <cofactor evidence="2 3">
        <name>pyridoxal 5'-phosphate</name>
        <dbReference type="ChEBI" id="CHEBI:597326"/>
    </cofactor>
</comment>
<comment type="pathway">
    <text evidence="2">Antibiotic biosynthesis; butirosin biosynthesis.</text>
</comment>
<comment type="subunit">
    <text evidence="2 3">Homodimer.</text>
</comment>
<comment type="similarity">
    <text evidence="4">Belongs to the Orn/Lys/Arg decarboxylase class-II family.</text>
</comment>
<comment type="sequence caution" evidence="4">
    <conflict type="erroneous initiation">
        <sequence resource="EMBL-CDS" id="CAG77429"/>
    </conflict>
    <text>Extended N-terminus.</text>
</comment>
<dbReference type="EC" id="4.1.1.95"/>
<dbReference type="EMBL" id="AB097196">
    <property type="protein sequence ID" value="BAE07075.1"/>
    <property type="molecule type" value="Genomic_DNA"/>
</dbReference>
<dbReference type="EMBL" id="AJ781030">
    <property type="protein sequence ID" value="CAG77429.1"/>
    <property type="status" value="ALT_INIT"/>
    <property type="molecule type" value="Genomic_DNA"/>
</dbReference>
<dbReference type="PDB" id="2J66">
    <property type="method" value="X-ray"/>
    <property type="resolution" value="1.65 A"/>
    <property type="chains" value="A=1-428"/>
</dbReference>
<dbReference type="PDB" id="7RU7">
    <property type="method" value="X-ray"/>
    <property type="resolution" value="1.40 A"/>
    <property type="chains" value="A=1-428"/>
</dbReference>
<dbReference type="PDBsum" id="2J66"/>
<dbReference type="PDBsum" id="7RU7"/>
<dbReference type="SMR" id="Q2L4H3"/>
<dbReference type="KEGG" id="ag:BAE07075"/>
<dbReference type="BioCyc" id="MetaCyc:MONOMER-17273"/>
<dbReference type="UniPathway" id="UPA00964"/>
<dbReference type="EvolutionaryTrace" id="Q2L4H3"/>
<dbReference type="GO" id="GO:0016831">
    <property type="term" value="F:carboxy-lyase activity"/>
    <property type="evidence" value="ECO:0000314"/>
    <property type="project" value="UniProtKB"/>
</dbReference>
<dbReference type="GO" id="GO:0008836">
    <property type="term" value="F:diaminopimelate decarboxylase activity"/>
    <property type="evidence" value="ECO:0007669"/>
    <property type="project" value="InterPro"/>
</dbReference>
<dbReference type="GO" id="GO:0042803">
    <property type="term" value="F:protein homodimerization activity"/>
    <property type="evidence" value="ECO:0000314"/>
    <property type="project" value="UniProtKB"/>
</dbReference>
<dbReference type="GO" id="GO:0017000">
    <property type="term" value="P:antibiotic biosynthetic process"/>
    <property type="evidence" value="ECO:0000314"/>
    <property type="project" value="UniProtKB"/>
</dbReference>
<dbReference type="GO" id="GO:0009089">
    <property type="term" value="P:lysine biosynthetic process via diaminopimelate"/>
    <property type="evidence" value="ECO:0007669"/>
    <property type="project" value="InterPro"/>
</dbReference>
<dbReference type="CDD" id="cd06839">
    <property type="entry name" value="PLPDE_III_Btrk_like"/>
    <property type="match status" value="1"/>
</dbReference>
<dbReference type="FunFam" id="3.20.20.10:FF:000050">
    <property type="entry name" value="L-glutamyl-[BtrI acyl-carrier protein] decarboxylase"/>
    <property type="match status" value="1"/>
</dbReference>
<dbReference type="Gene3D" id="3.20.20.10">
    <property type="entry name" value="Alanine racemase"/>
    <property type="match status" value="1"/>
</dbReference>
<dbReference type="Gene3D" id="2.40.37.10">
    <property type="entry name" value="Lyase, Ornithine Decarboxylase, Chain A, domain 1"/>
    <property type="match status" value="1"/>
</dbReference>
<dbReference type="InterPro" id="IPR009006">
    <property type="entry name" value="Ala_racemase/Decarboxylase_C"/>
</dbReference>
<dbReference type="InterPro" id="IPR002986">
    <property type="entry name" value="DAP_deCOOHase_LysA"/>
</dbReference>
<dbReference type="InterPro" id="IPR022643">
    <property type="entry name" value="De-COase2_C"/>
</dbReference>
<dbReference type="InterPro" id="IPR022657">
    <property type="entry name" value="De-COase2_CS"/>
</dbReference>
<dbReference type="InterPro" id="IPR022644">
    <property type="entry name" value="De-COase2_N"/>
</dbReference>
<dbReference type="InterPro" id="IPR000183">
    <property type="entry name" value="Orn/DAP/Arg_de-COase"/>
</dbReference>
<dbReference type="InterPro" id="IPR029066">
    <property type="entry name" value="PLP-binding_barrel"/>
</dbReference>
<dbReference type="PANTHER" id="PTHR43727">
    <property type="entry name" value="DIAMINOPIMELATE DECARBOXYLASE"/>
    <property type="match status" value="1"/>
</dbReference>
<dbReference type="PANTHER" id="PTHR43727:SF2">
    <property type="entry name" value="GROUP IV DECARBOXYLASE"/>
    <property type="match status" value="1"/>
</dbReference>
<dbReference type="Pfam" id="PF02784">
    <property type="entry name" value="Orn_Arg_deC_N"/>
    <property type="match status" value="1"/>
</dbReference>
<dbReference type="Pfam" id="PF00278">
    <property type="entry name" value="Orn_DAP_Arg_deC"/>
    <property type="match status" value="1"/>
</dbReference>
<dbReference type="PRINTS" id="PR01181">
    <property type="entry name" value="DAPDCRBXLASE"/>
</dbReference>
<dbReference type="PRINTS" id="PR01179">
    <property type="entry name" value="ODADCRBXLASE"/>
</dbReference>
<dbReference type="SUPFAM" id="SSF50621">
    <property type="entry name" value="Alanine racemase C-terminal domain-like"/>
    <property type="match status" value="1"/>
</dbReference>
<dbReference type="SUPFAM" id="SSF51419">
    <property type="entry name" value="PLP-binding barrel"/>
    <property type="match status" value="1"/>
</dbReference>
<dbReference type="PROSITE" id="PS00879">
    <property type="entry name" value="ODR_DC_2_2"/>
    <property type="match status" value="1"/>
</dbReference>
<organism>
    <name type="scientific">Niallia circulans</name>
    <name type="common">Bacillus circulans</name>
    <dbReference type="NCBI Taxonomy" id="1397"/>
    <lineage>
        <taxon>Bacteria</taxon>
        <taxon>Bacillati</taxon>
        <taxon>Bacillota</taxon>
        <taxon>Bacilli</taxon>
        <taxon>Bacillales</taxon>
        <taxon>Bacillaceae</taxon>
        <taxon>Niallia</taxon>
    </lineage>
</organism>
<name>BTRK_NIACI</name>
<sequence>MNLDQAEITALTKRFETPFYLYDGDFIEAHYRQLRSRTNPAIQFYLSLKANNNIHLAKLFRQWGLGVEVASAGELALARHAGFSAENIIFSGPGKKRSELEIAVQSGIYCIIAESVEELFYIEELAEKENKTARVAIRINPDKSFGSTAIKMGGVPRQFGMDESMLDAVMDAVRSLQFTKFIGIHVYTGTQNLNTDSIIESMKYTVDLGRNIYERYGIVCECINLGGGFGVPYFSHEKALDIGKITRTVSDYVQEARDTRFPQTTFIIESGRYLLAQAAVYVTEVLYRKASKGEVFVIVDGGMHHHAASTFRGRSMRSNYPMEYIPVREDSGRRELEKVTIAGPLCTPEDCLGKDVHVPALYPGDLVCVLNSGAYGLSFSPVHFLGHPTPIEILKRNGSYELIRRKGTADDIVATQLQTESNLLFVDK</sequence>
<accession>Q2L4H3</accession>
<accession>Q4H4E6</accession>
<gene>
    <name type="primary">btrK</name>
</gene>